<evidence type="ECO:0000255" key="1">
    <source>
        <dbReference type="HAMAP-Rule" id="MF_00186"/>
    </source>
</evidence>
<protein>
    <recommendedName>
        <fullName evidence="1">Glycerol kinase</fullName>
        <ecNumber evidence="1">2.7.1.30</ecNumber>
    </recommendedName>
    <alternativeName>
        <fullName evidence="1">ATP:glycerol 3-phosphotransferase</fullName>
    </alternativeName>
    <alternativeName>
        <fullName evidence="1">Glycerokinase</fullName>
        <shortName evidence="1">GK</shortName>
    </alternativeName>
</protein>
<accession>Q2YXR6</accession>
<proteinExistence type="inferred from homology"/>
<comment type="function">
    <text evidence="1">Key enzyme in the regulation of glycerol uptake and metabolism. Catalyzes the phosphorylation of glycerol to yield sn-glycerol 3-phosphate.</text>
</comment>
<comment type="catalytic activity">
    <reaction evidence="1">
        <text>glycerol + ATP = sn-glycerol 3-phosphate + ADP + H(+)</text>
        <dbReference type="Rhea" id="RHEA:21644"/>
        <dbReference type="ChEBI" id="CHEBI:15378"/>
        <dbReference type="ChEBI" id="CHEBI:17754"/>
        <dbReference type="ChEBI" id="CHEBI:30616"/>
        <dbReference type="ChEBI" id="CHEBI:57597"/>
        <dbReference type="ChEBI" id="CHEBI:456216"/>
        <dbReference type="EC" id="2.7.1.30"/>
    </reaction>
</comment>
<comment type="activity regulation">
    <text evidence="1">Activated by phosphorylation and inhibited by fructose 1,6-bisphosphate (FBP).</text>
</comment>
<comment type="pathway">
    <text evidence="1">Polyol metabolism; glycerol degradation via glycerol kinase pathway; sn-glycerol 3-phosphate from glycerol: step 1/1.</text>
</comment>
<comment type="subunit">
    <text evidence="1">Homotetramer and homodimer (in equilibrium).</text>
</comment>
<comment type="PTM">
    <text evidence="1">The phosphoenolpyruvate-dependent sugar phosphotransferase system (PTS), including enzyme I, and histidine-containing protein (HPr) are required for the phosphorylation, which leads to the activation of the enzyme.</text>
</comment>
<comment type="similarity">
    <text evidence="1">Belongs to the FGGY kinase family.</text>
</comment>
<organism>
    <name type="scientific">Staphylococcus aureus (strain bovine RF122 / ET3-1)</name>
    <dbReference type="NCBI Taxonomy" id="273036"/>
    <lineage>
        <taxon>Bacteria</taxon>
        <taxon>Bacillati</taxon>
        <taxon>Bacillota</taxon>
        <taxon>Bacilli</taxon>
        <taxon>Bacillales</taxon>
        <taxon>Staphylococcaceae</taxon>
        <taxon>Staphylococcus</taxon>
    </lineage>
</organism>
<gene>
    <name evidence="1" type="primary">glpK</name>
    <name type="ordered locus">SAB1161</name>
</gene>
<dbReference type="EC" id="2.7.1.30" evidence="1"/>
<dbReference type="EMBL" id="AJ938182">
    <property type="protein sequence ID" value="CAI80850.1"/>
    <property type="molecule type" value="Genomic_DNA"/>
</dbReference>
<dbReference type="RefSeq" id="WP_000417384.1">
    <property type="nucleotide sequence ID" value="NC_007622.1"/>
</dbReference>
<dbReference type="SMR" id="Q2YXR6"/>
<dbReference type="KEGG" id="sab:SAB1161"/>
<dbReference type="HOGENOM" id="CLU_009281_2_3_9"/>
<dbReference type="UniPathway" id="UPA00618">
    <property type="reaction ID" value="UER00672"/>
</dbReference>
<dbReference type="GO" id="GO:0005829">
    <property type="term" value="C:cytosol"/>
    <property type="evidence" value="ECO:0007669"/>
    <property type="project" value="TreeGrafter"/>
</dbReference>
<dbReference type="GO" id="GO:0005524">
    <property type="term" value="F:ATP binding"/>
    <property type="evidence" value="ECO:0007669"/>
    <property type="project" value="UniProtKB-UniRule"/>
</dbReference>
<dbReference type="GO" id="GO:0004370">
    <property type="term" value="F:glycerol kinase activity"/>
    <property type="evidence" value="ECO:0000250"/>
    <property type="project" value="UniProtKB"/>
</dbReference>
<dbReference type="GO" id="GO:0019563">
    <property type="term" value="P:glycerol catabolic process"/>
    <property type="evidence" value="ECO:0007669"/>
    <property type="project" value="UniProtKB-UniRule"/>
</dbReference>
<dbReference type="GO" id="GO:0006071">
    <property type="term" value="P:glycerol metabolic process"/>
    <property type="evidence" value="ECO:0000250"/>
    <property type="project" value="UniProtKB"/>
</dbReference>
<dbReference type="GO" id="GO:0006072">
    <property type="term" value="P:glycerol-3-phosphate metabolic process"/>
    <property type="evidence" value="ECO:0007669"/>
    <property type="project" value="InterPro"/>
</dbReference>
<dbReference type="CDD" id="cd07786">
    <property type="entry name" value="FGGY_EcGK_like"/>
    <property type="match status" value="1"/>
</dbReference>
<dbReference type="FunFam" id="3.30.420.40:FF:000007">
    <property type="entry name" value="Glycerol kinase"/>
    <property type="match status" value="1"/>
</dbReference>
<dbReference type="FunFam" id="3.30.420.40:FF:000008">
    <property type="entry name" value="Glycerol kinase"/>
    <property type="match status" value="1"/>
</dbReference>
<dbReference type="Gene3D" id="3.30.420.40">
    <property type="match status" value="2"/>
</dbReference>
<dbReference type="HAMAP" id="MF_00186">
    <property type="entry name" value="Glycerol_kin"/>
    <property type="match status" value="1"/>
</dbReference>
<dbReference type="InterPro" id="IPR043129">
    <property type="entry name" value="ATPase_NBD"/>
</dbReference>
<dbReference type="InterPro" id="IPR000577">
    <property type="entry name" value="Carb_kinase_FGGY"/>
</dbReference>
<dbReference type="InterPro" id="IPR018483">
    <property type="entry name" value="Carb_kinase_FGGY_CS"/>
</dbReference>
<dbReference type="InterPro" id="IPR018485">
    <property type="entry name" value="FGGY_C"/>
</dbReference>
<dbReference type="InterPro" id="IPR018484">
    <property type="entry name" value="FGGY_N"/>
</dbReference>
<dbReference type="InterPro" id="IPR005999">
    <property type="entry name" value="Glycerol_kin"/>
</dbReference>
<dbReference type="NCBIfam" id="TIGR01311">
    <property type="entry name" value="glycerol_kin"/>
    <property type="match status" value="1"/>
</dbReference>
<dbReference type="NCBIfam" id="NF000756">
    <property type="entry name" value="PRK00047.1"/>
    <property type="match status" value="1"/>
</dbReference>
<dbReference type="PANTHER" id="PTHR10196:SF69">
    <property type="entry name" value="GLYCEROL KINASE"/>
    <property type="match status" value="1"/>
</dbReference>
<dbReference type="PANTHER" id="PTHR10196">
    <property type="entry name" value="SUGAR KINASE"/>
    <property type="match status" value="1"/>
</dbReference>
<dbReference type="Pfam" id="PF02782">
    <property type="entry name" value="FGGY_C"/>
    <property type="match status" value="1"/>
</dbReference>
<dbReference type="Pfam" id="PF00370">
    <property type="entry name" value="FGGY_N"/>
    <property type="match status" value="1"/>
</dbReference>
<dbReference type="PIRSF" id="PIRSF000538">
    <property type="entry name" value="GlpK"/>
    <property type="match status" value="1"/>
</dbReference>
<dbReference type="SUPFAM" id="SSF53067">
    <property type="entry name" value="Actin-like ATPase domain"/>
    <property type="match status" value="2"/>
</dbReference>
<dbReference type="PROSITE" id="PS00445">
    <property type="entry name" value="FGGY_KINASES_2"/>
    <property type="match status" value="1"/>
</dbReference>
<feature type="chain" id="PRO_1000020794" description="Glycerol kinase">
    <location>
        <begin position="1"/>
        <end position="498"/>
    </location>
</feature>
<feature type="binding site" evidence="1">
    <location>
        <position position="12"/>
    </location>
    <ligand>
        <name>ADP</name>
        <dbReference type="ChEBI" id="CHEBI:456216"/>
    </ligand>
</feature>
<feature type="binding site" evidence="1">
    <location>
        <position position="12"/>
    </location>
    <ligand>
        <name>ATP</name>
        <dbReference type="ChEBI" id="CHEBI:30616"/>
    </ligand>
</feature>
<feature type="binding site" evidence="1">
    <location>
        <position position="12"/>
    </location>
    <ligand>
        <name>sn-glycerol 3-phosphate</name>
        <dbReference type="ChEBI" id="CHEBI:57597"/>
    </ligand>
</feature>
<feature type="binding site" evidence="1">
    <location>
        <position position="13"/>
    </location>
    <ligand>
        <name>ATP</name>
        <dbReference type="ChEBI" id="CHEBI:30616"/>
    </ligand>
</feature>
<feature type="binding site" evidence="1">
    <location>
        <position position="14"/>
    </location>
    <ligand>
        <name>ATP</name>
        <dbReference type="ChEBI" id="CHEBI:30616"/>
    </ligand>
</feature>
<feature type="binding site" evidence="1">
    <location>
        <position position="16"/>
    </location>
    <ligand>
        <name>ADP</name>
        <dbReference type="ChEBI" id="CHEBI:456216"/>
    </ligand>
</feature>
<feature type="binding site" evidence="1">
    <location>
        <position position="82"/>
    </location>
    <ligand>
        <name>glycerol</name>
        <dbReference type="ChEBI" id="CHEBI:17754"/>
    </ligand>
</feature>
<feature type="binding site" evidence="1">
    <location>
        <position position="82"/>
    </location>
    <ligand>
        <name>sn-glycerol 3-phosphate</name>
        <dbReference type="ChEBI" id="CHEBI:57597"/>
    </ligand>
</feature>
<feature type="binding site" evidence="1">
    <location>
        <position position="83"/>
    </location>
    <ligand>
        <name>glycerol</name>
        <dbReference type="ChEBI" id="CHEBI:17754"/>
    </ligand>
</feature>
<feature type="binding site" evidence="1">
    <location>
        <position position="83"/>
    </location>
    <ligand>
        <name>sn-glycerol 3-phosphate</name>
        <dbReference type="ChEBI" id="CHEBI:57597"/>
    </ligand>
</feature>
<feature type="binding site" evidence="1">
    <location>
        <position position="134"/>
    </location>
    <ligand>
        <name>glycerol</name>
        <dbReference type="ChEBI" id="CHEBI:17754"/>
    </ligand>
</feature>
<feature type="binding site" evidence="1">
    <location>
        <position position="134"/>
    </location>
    <ligand>
        <name>sn-glycerol 3-phosphate</name>
        <dbReference type="ChEBI" id="CHEBI:57597"/>
    </ligand>
</feature>
<feature type="binding site" evidence="1">
    <location>
        <position position="244"/>
    </location>
    <ligand>
        <name>glycerol</name>
        <dbReference type="ChEBI" id="CHEBI:17754"/>
    </ligand>
</feature>
<feature type="binding site" evidence="1">
    <location>
        <position position="244"/>
    </location>
    <ligand>
        <name>sn-glycerol 3-phosphate</name>
        <dbReference type="ChEBI" id="CHEBI:57597"/>
    </ligand>
</feature>
<feature type="binding site" evidence="1">
    <location>
        <position position="245"/>
    </location>
    <ligand>
        <name>glycerol</name>
        <dbReference type="ChEBI" id="CHEBI:17754"/>
    </ligand>
</feature>
<feature type="binding site" evidence="1">
    <location>
        <position position="266"/>
    </location>
    <ligand>
        <name>ADP</name>
        <dbReference type="ChEBI" id="CHEBI:456216"/>
    </ligand>
</feature>
<feature type="binding site" evidence="1">
    <location>
        <position position="266"/>
    </location>
    <ligand>
        <name>ATP</name>
        <dbReference type="ChEBI" id="CHEBI:30616"/>
    </ligand>
</feature>
<feature type="binding site" evidence="1">
    <location>
        <position position="309"/>
    </location>
    <ligand>
        <name>ADP</name>
        <dbReference type="ChEBI" id="CHEBI:456216"/>
    </ligand>
</feature>
<feature type="binding site" evidence="1">
    <location>
        <position position="309"/>
    </location>
    <ligand>
        <name>ATP</name>
        <dbReference type="ChEBI" id="CHEBI:30616"/>
    </ligand>
</feature>
<feature type="binding site" evidence="1">
    <location>
        <position position="313"/>
    </location>
    <ligand>
        <name>ATP</name>
        <dbReference type="ChEBI" id="CHEBI:30616"/>
    </ligand>
</feature>
<feature type="binding site" evidence="1">
    <location>
        <position position="410"/>
    </location>
    <ligand>
        <name>ADP</name>
        <dbReference type="ChEBI" id="CHEBI:456216"/>
    </ligand>
</feature>
<feature type="binding site" evidence="1">
    <location>
        <position position="410"/>
    </location>
    <ligand>
        <name>ATP</name>
        <dbReference type="ChEBI" id="CHEBI:30616"/>
    </ligand>
</feature>
<feature type="binding site" evidence="1">
    <location>
        <position position="414"/>
    </location>
    <ligand>
        <name>ADP</name>
        <dbReference type="ChEBI" id="CHEBI:456216"/>
    </ligand>
</feature>
<feature type="modified residue" description="Phosphohistidine; by HPr" evidence="1">
    <location>
        <position position="230"/>
    </location>
</feature>
<sequence>MEKYILSIDQGTTSSRAILFNQKGEIAGVAQREFKQYFPQSGWVEHDANEIWTSVLAVMTEVINENDVRADQIAGIGITNQRETTVVWDKHTGRPIYHAIVWQSRQTQSICSELKQQGYEQTFRDKTGLLLDPYFAGTKVKWILDNVEGAREKAENGGLLFGTIDTWLVWKLSGKAAHITDYSNASRTLMFNIHDLEWDDELLELLTVPKNMLPEVKPSSEVYGKTIDYHFYGQEVPIAGVAGDQQAALFGQACFERGDVKNTYGTGGFMLMNTGDKAVKSESGLLTTIAYGIDGKVNYALEGSIFVSGSAIQWLRDGLRMINSAPQSESYATRVDSTEGVYVVPAFVGLGTPYWDSEARGAIFGLTRGTEKEHFIRATLESLCYQTRDVMEAMSKDSGIDVQSLRVDGGAVKNNFIMQFQADIVNTSVERPEIQETTALGAAYLAGLAVGFWESKDDIAKNWKLEEKFDPKMDEGEREKLYRGWKKAVEATQVFKTE</sequence>
<keyword id="KW-0067">ATP-binding</keyword>
<keyword id="KW-0319">Glycerol metabolism</keyword>
<keyword id="KW-0418">Kinase</keyword>
<keyword id="KW-0547">Nucleotide-binding</keyword>
<keyword id="KW-0597">Phosphoprotein</keyword>
<keyword id="KW-0808">Transferase</keyword>
<reference key="1">
    <citation type="journal article" date="2007" name="PLoS ONE">
        <title>Molecular correlates of host specialization in Staphylococcus aureus.</title>
        <authorList>
            <person name="Herron-Olson L."/>
            <person name="Fitzgerald J.R."/>
            <person name="Musser J.M."/>
            <person name="Kapur V."/>
        </authorList>
    </citation>
    <scope>NUCLEOTIDE SEQUENCE [LARGE SCALE GENOMIC DNA]</scope>
    <source>
        <strain>bovine RF122 / ET3-1</strain>
    </source>
</reference>
<name>GLPK_STAAB</name>